<organism>
    <name type="scientific">Sulfurihydrogenibium sp. (strain YO3AOP1)</name>
    <dbReference type="NCBI Taxonomy" id="436114"/>
    <lineage>
        <taxon>Bacteria</taxon>
        <taxon>Pseudomonadati</taxon>
        <taxon>Aquificota</taxon>
        <taxon>Aquificia</taxon>
        <taxon>Aquificales</taxon>
        <taxon>Hydrogenothermaceae</taxon>
        <taxon>Sulfurihydrogenibium</taxon>
    </lineage>
</organism>
<proteinExistence type="inferred from homology"/>
<keyword id="KW-0687">Ribonucleoprotein</keyword>
<keyword id="KW-0689">Ribosomal protein</keyword>
<evidence type="ECO:0000255" key="1">
    <source>
        <dbReference type="HAMAP-Rule" id="MF_01371"/>
    </source>
</evidence>
<evidence type="ECO:0000305" key="2"/>
<accession>B2V7J5</accession>
<sequence>MKIKVKLIKGLAGKDQKQKQALRSLGLKKIYEERILEKNPAVLGNLDKVRHLVKVEEVE</sequence>
<gene>
    <name evidence="1" type="primary">rpmD</name>
    <name type="ordered locus">SYO3AOP1_0273</name>
</gene>
<reference key="1">
    <citation type="journal article" date="2009" name="J. Bacteriol.">
        <title>Complete and draft genome sequences of six members of the Aquificales.</title>
        <authorList>
            <person name="Reysenbach A.-L."/>
            <person name="Hamamura N."/>
            <person name="Podar M."/>
            <person name="Griffiths E."/>
            <person name="Ferreira S."/>
            <person name="Hochstein R."/>
            <person name="Heidelberg J."/>
            <person name="Johnson J."/>
            <person name="Mead D."/>
            <person name="Pohorille A."/>
            <person name="Sarmiento M."/>
            <person name="Schweighofer K."/>
            <person name="Seshadri R."/>
            <person name="Voytek M.A."/>
        </authorList>
    </citation>
    <scope>NUCLEOTIDE SEQUENCE [LARGE SCALE GENOMIC DNA]</scope>
    <source>
        <strain>YO3AOP1</strain>
    </source>
</reference>
<dbReference type="EMBL" id="CP001080">
    <property type="protein sequence ID" value="ACD65918.1"/>
    <property type="molecule type" value="Genomic_DNA"/>
</dbReference>
<dbReference type="RefSeq" id="WP_012459007.1">
    <property type="nucleotide sequence ID" value="NC_010730.1"/>
</dbReference>
<dbReference type="SMR" id="B2V7J5"/>
<dbReference type="STRING" id="436114.SYO3AOP1_0273"/>
<dbReference type="KEGG" id="sul:SYO3AOP1_0273"/>
<dbReference type="eggNOG" id="COG1841">
    <property type="taxonomic scope" value="Bacteria"/>
</dbReference>
<dbReference type="HOGENOM" id="CLU_131047_2_1_0"/>
<dbReference type="GO" id="GO:0022625">
    <property type="term" value="C:cytosolic large ribosomal subunit"/>
    <property type="evidence" value="ECO:0007669"/>
    <property type="project" value="TreeGrafter"/>
</dbReference>
<dbReference type="GO" id="GO:0003735">
    <property type="term" value="F:structural constituent of ribosome"/>
    <property type="evidence" value="ECO:0007669"/>
    <property type="project" value="InterPro"/>
</dbReference>
<dbReference type="GO" id="GO:0006412">
    <property type="term" value="P:translation"/>
    <property type="evidence" value="ECO:0007669"/>
    <property type="project" value="UniProtKB-UniRule"/>
</dbReference>
<dbReference type="CDD" id="cd01658">
    <property type="entry name" value="Ribosomal_L30"/>
    <property type="match status" value="1"/>
</dbReference>
<dbReference type="Gene3D" id="3.30.1390.20">
    <property type="entry name" value="Ribosomal protein L30, ferredoxin-like fold domain"/>
    <property type="match status" value="1"/>
</dbReference>
<dbReference type="HAMAP" id="MF_01371_B">
    <property type="entry name" value="Ribosomal_uL30_B"/>
    <property type="match status" value="1"/>
</dbReference>
<dbReference type="InterPro" id="IPR036919">
    <property type="entry name" value="Ribo_uL30_ferredoxin-like_sf"/>
</dbReference>
<dbReference type="InterPro" id="IPR005996">
    <property type="entry name" value="Ribosomal_uL30_bac-type"/>
</dbReference>
<dbReference type="InterPro" id="IPR016082">
    <property type="entry name" value="Ribosomal_uL30_ferredoxin-like"/>
</dbReference>
<dbReference type="NCBIfam" id="TIGR01308">
    <property type="entry name" value="rpmD_bact"/>
    <property type="match status" value="1"/>
</dbReference>
<dbReference type="PANTHER" id="PTHR15892:SF2">
    <property type="entry name" value="LARGE RIBOSOMAL SUBUNIT PROTEIN UL30M"/>
    <property type="match status" value="1"/>
</dbReference>
<dbReference type="PANTHER" id="PTHR15892">
    <property type="entry name" value="MITOCHONDRIAL RIBOSOMAL PROTEIN L30"/>
    <property type="match status" value="1"/>
</dbReference>
<dbReference type="Pfam" id="PF00327">
    <property type="entry name" value="Ribosomal_L30"/>
    <property type="match status" value="1"/>
</dbReference>
<dbReference type="PIRSF" id="PIRSF002211">
    <property type="entry name" value="Ribosomal_L30_bac-type"/>
    <property type="match status" value="1"/>
</dbReference>
<dbReference type="SUPFAM" id="SSF55129">
    <property type="entry name" value="Ribosomal protein L30p/L7e"/>
    <property type="match status" value="1"/>
</dbReference>
<protein>
    <recommendedName>
        <fullName evidence="1">Large ribosomal subunit protein uL30</fullName>
    </recommendedName>
    <alternativeName>
        <fullName evidence="2">50S ribosomal protein L30</fullName>
    </alternativeName>
</protein>
<name>RL30_SULSY</name>
<comment type="subunit">
    <text evidence="1">Part of the 50S ribosomal subunit.</text>
</comment>
<comment type="similarity">
    <text evidence="1">Belongs to the universal ribosomal protein uL30 family.</text>
</comment>
<feature type="chain" id="PRO_1000144727" description="Large ribosomal subunit protein uL30">
    <location>
        <begin position="1"/>
        <end position="59"/>
    </location>
</feature>